<dbReference type="EC" id="3.2.1.113" evidence="9 11"/>
<dbReference type="EMBL" id="AF005035">
    <property type="protein sequence ID" value="AAB62720.1"/>
    <property type="molecule type" value="mRNA"/>
</dbReference>
<dbReference type="SMR" id="O18498"/>
<dbReference type="CAZy" id="GH47">
    <property type="family name" value="Glycoside Hydrolase Family 47"/>
</dbReference>
<dbReference type="iPTMnet" id="O18498"/>
<dbReference type="OrthoDB" id="8118055at2759"/>
<dbReference type="UniPathway" id="UPA00378"/>
<dbReference type="Proteomes" id="UP000829999">
    <property type="component" value="Unplaced"/>
</dbReference>
<dbReference type="GO" id="GO:0005783">
    <property type="term" value="C:endoplasmic reticulum"/>
    <property type="evidence" value="ECO:0007669"/>
    <property type="project" value="TreeGrafter"/>
</dbReference>
<dbReference type="GO" id="GO:0005794">
    <property type="term" value="C:Golgi apparatus"/>
    <property type="evidence" value="ECO:0000314"/>
    <property type="project" value="UniProtKB"/>
</dbReference>
<dbReference type="GO" id="GO:0000139">
    <property type="term" value="C:Golgi membrane"/>
    <property type="evidence" value="ECO:0007669"/>
    <property type="project" value="UniProtKB-SubCell"/>
</dbReference>
<dbReference type="GO" id="GO:0005509">
    <property type="term" value="F:calcium ion binding"/>
    <property type="evidence" value="ECO:0000250"/>
    <property type="project" value="UniProtKB"/>
</dbReference>
<dbReference type="GO" id="GO:0004571">
    <property type="term" value="F:mannosyl-oligosaccharide 1,2-alpha-mannosidase activity"/>
    <property type="evidence" value="ECO:0000314"/>
    <property type="project" value="UniProtKB"/>
</dbReference>
<dbReference type="GO" id="GO:0005975">
    <property type="term" value="P:carbohydrate metabolic process"/>
    <property type="evidence" value="ECO:0007669"/>
    <property type="project" value="InterPro"/>
</dbReference>
<dbReference type="GO" id="GO:0006491">
    <property type="term" value="P:N-glycan processing"/>
    <property type="evidence" value="ECO:0000314"/>
    <property type="project" value="UniProtKB"/>
</dbReference>
<dbReference type="GO" id="GO:0006486">
    <property type="term" value="P:protein glycosylation"/>
    <property type="evidence" value="ECO:0007669"/>
    <property type="project" value="UniProtKB-UniPathway"/>
</dbReference>
<dbReference type="FunFam" id="1.50.10.10:FF:000017">
    <property type="entry name" value="alpha-1,2-Mannosidase"/>
    <property type="match status" value="1"/>
</dbReference>
<dbReference type="Gene3D" id="1.50.10.10">
    <property type="match status" value="1"/>
</dbReference>
<dbReference type="InterPro" id="IPR012341">
    <property type="entry name" value="6hp_glycosidase-like_sf"/>
</dbReference>
<dbReference type="InterPro" id="IPR001382">
    <property type="entry name" value="Glyco_hydro_47"/>
</dbReference>
<dbReference type="InterPro" id="IPR050749">
    <property type="entry name" value="Glycosyl_Hydrolase_47"/>
</dbReference>
<dbReference type="InterPro" id="IPR036026">
    <property type="entry name" value="Seven-hairpin_glycosidases"/>
</dbReference>
<dbReference type="PANTHER" id="PTHR11742:SF6">
    <property type="entry name" value="MANNOSYL-OLIGOSACCHARIDE ALPHA-1,2-MANNOSIDASE IA-RELATED"/>
    <property type="match status" value="1"/>
</dbReference>
<dbReference type="PANTHER" id="PTHR11742">
    <property type="entry name" value="MANNOSYL-OLIGOSACCHARIDE ALPHA-1,2-MANNOSIDASE-RELATED"/>
    <property type="match status" value="1"/>
</dbReference>
<dbReference type="Pfam" id="PF01532">
    <property type="entry name" value="Glyco_hydro_47"/>
    <property type="match status" value="1"/>
</dbReference>
<dbReference type="PRINTS" id="PR00747">
    <property type="entry name" value="GLYHDRLASE47"/>
</dbReference>
<dbReference type="SUPFAM" id="SSF48225">
    <property type="entry name" value="Seven-hairpin glycosidases"/>
    <property type="match status" value="1"/>
</dbReference>
<comment type="function">
    <text evidence="9">Involved in the maturation of Asn-linked oligosaccharides. Converts Man(9)GlcNAc(2) to Man(5)GlcNAc(2) primarily through the Man(7)GlcNAc(2) isomer C processing intermediate.</text>
</comment>
<comment type="catalytic activity">
    <reaction evidence="9 11">
        <text>N(4)-(alpha-D-Man-(1-&gt;2)-alpha-D-Man-(1-&gt;2)-alpha-D-Man-(1-&gt;3)-[alpha-D-Man-(1-&gt;2)-alpha-D-Man-(1-&gt;3)-[alpha-D-Man-(1-&gt;2)-alpha-D-Man-(1-&gt;6)]-alpha-D-Man-(1-&gt;6)]-beta-D-Man-(1-&gt;4)-beta-D-GlcNAc-(1-&gt;4)-beta-D-GlcNAc)-L-asparaginyl-[protein] (N-glucan mannose isomer 9A1,2,3B1,2,3) + 4 H2O = N(4)-(alpha-D-Man-(1-&gt;3)-[alpha-D-Man-(1-&gt;3)-[alpha-D-Man-(1-&gt;6)]-alpha-D-Man-(1-&gt;6)]-beta-D-Man-(1-&gt;4)-beta-D-GlcNAc-(1-&gt;4)-beta-D-GlcNAc)-L-asparaginyl-[protein] (N-glucan mannose isomer 5A1,2) + 4 beta-D-mannose</text>
        <dbReference type="Rhea" id="RHEA:56008"/>
        <dbReference type="Rhea" id="RHEA-COMP:14356"/>
        <dbReference type="Rhea" id="RHEA-COMP:14367"/>
        <dbReference type="ChEBI" id="CHEBI:15377"/>
        <dbReference type="ChEBI" id="CHEBI:28563"/>
        <dbReference type="ChEBI" id="CHEBI:59087"/>
        <dbReference type="ChEBI" id="CHEBI:139493"/>
        <dbReference type="EC" id="3.2.1.113"/>
    </reaction>
</comment>
<comment type="catalytic activity">
    <reaction evidence="9">
        <text>N(4)-(alpha-D-Man-(1-&gt;2)-alpha-D-Man-(1-&gt;2)-alpha-D-Man-(1-&gt;3)-[alpha-D-Man-(1-&gt;3)-[alpha-D-Man-(1-&gt;2)-alpha-D-Man-(1-&gt;6)]-alpha-D-Man-(1-&gt;6)]-beta-D-Man-(1-&gt;4)-beta-D-GlcNAc-(1-&gt;4)-beta-D-GlcNAc)-L-asparaginyl-[protein] (N-glucan mannose isomer 8A1,2,3B1,3) + 3 H2O = N(4)-(alpha-D-Man-(1-&gt;3)-[alpha-D-Man-(1-&gt;3)-[alpha-D-Man-(1-&gt;6)]-alpha-D-Man-(1-&gt;6)]-beta-D-Man-(1-&gt;4)-beta-D-GlcNAc-(1-&gt;4)-beta-D-GlcNAc)-L-asparaginyl-[protein] (N-glucan mannose isomer 5A1,2) + 3 beta-D-mannose</text>
        <dbReference type="Rhea" id="RHEA:56028"/>
        <dbReference type="Rhea" id="RHEA-COMP:14358"/>
        <dbReference type="Rhea" id="RHEA-COMP:14367"/>
        <dbReference type="ChEBI" id="CHEBI:15377"/>
        <dbReference type="ChEBI" id="CHEBI:28563"/>
        <dbReference type="ChEBI" id="CHEBI:59087"/>
        <dbReference type="ChEBI" id="CHEBI:60628"/>
        <dbReference type="EC" id="3.2.1.113"/>
    </reaction>
</comment>
<comment type="cofactor">
    <cofactor evidence="3">
        <name>Ca(2+)</name>
        <dbReference type="ChEBI" id="CHEBI:29108"/>
    </cofactor>
</comment>
<comment type="activity regulation">
    <text evidence="11">Strongly inhibited by 1-deoxymannojirimycin, an inhibitor of class I alpha-mannosidases, and by EDTA. EDTA inhibition is reversed by the addition of calcium, but not of magnesium.</text>
</comment>
<comment type="pathway">
    <text evidence="2">Protein modification; protein glycosylation.</text>
</comment>
<comment type="subcellular location">
    <subcellularLocation>
        <location evidence="16">Golgi apparatus membrane</location>
        <topology evidence="4">Single-pass type II membrane protein</topology>
    </subcellularLocation>
    <text evidence="10">Localizes in cytoplasmic punctate structures representing Golgi elements.</text>
</comment>
<comment type="PTM">
    <text evidence="9 10">N-glycosylated (PubMed:10764822, PubMed:11222938). Contains high mannose-type oligosaccharides (PubMed:11222938).</text>
</comment>
<comment type="similarity">
    <text evidence="7">Belongs to the glycosyl hydrolase 47 family.</text>
</comment>
<evidence type="ECO:0000250" key="1">
    <source>
        <dbReference type="UniProtKB" id="P31723"/>
    </source>
</evidence>
<evidence type="ECO:0000250" key="2">
    <source>
        <dbReference type="UniProtKB" id="P32906"/>
    </source>
</evidence>
<evidence type="ECO:0000250" key="3">
    <source>
        <dbReference type="UniProtKB" id="Q2ULB2"/>
    </source>
</evidence>
<evidence type="ECO:0000250" key="4">
    <source>
        <dbReference type="UniProtKB" id="Q8H116"/>
    </source>
</evidence>
<evidence type="ECO:0000255" key="5"/>
<evidence type="ECO:0000255" key="6">
    <source>
        <dbReference type="PROSITE-ProRule" id="PRU00498"/>
    </source>
</evidence>
<evidence type="ECO:0000255" key="7">
    <source>
        <dbReference type="RuleBase" id="RU361193"/>
    </source>
</evidence>
<evidence type="ECO:0000256" key="8">
    <source>
        <dbReference type="SAM" id="MobiDB-lite"/>
    </source>
</evidence>
<evidence type="ECO:0000269" key="9">
    <source>
    </source>
</evidence>
<evidence type="ECO:0000269" key="10">
    <source>
    </source>
</evidence>
<evidence type="ECO:0000269" key="11">
    <source>
    </source>
</evidence>
<evidence type="ECO:0000303" key="12">
    <source>
    </source>
</evidence>
<evidence type="ECO:0000303" key="13">
    <source>
    </source>
</evidence>
<evidence type="ECO:0000303" key="14">
    <source>
    </source>
</evidence>
<evidence type="ECO:0000305" key="15"/>
<evidence type="ECO:0000305" key="16">
    <source>
    </source>
</evidence>
<evidence type="ECO:0000312" key="17">
    <source>
        <dbReference type="EMBL" id="AAB62720.1"/>
    </source>
</evidence>
<protein>
    <recommendedName>
        <fullName evidence="15">Mannosyl-oligosaccharide alpha-1,2-mannosidase IA</fullName>
        <ecNumber evidence="9 11">3.2.1.113</ecNumber>
    </recommendedName>
    <alternativeName>
        <fullName evidence="12 13 14">Alpha-1,2-mannosidase</fullName>
    </alternativeName>
    <alternativeName>
        <fullName evidence="12">Class I alpha-1,2-mannosidase</fullName>
    </alternativeName>
    <alternativeName>
        <fullName evidence="15">Man(9)-alpha-mannosidase</fullName>
    </alternativeName>
    <alternativeName>
        <fullName evidence="12 13 14">SfManI</fullName>
    </alternativeName>
</protein>
<accession>O18498</accession>
<name>MA1A1_SPOFR</name>
<reference evidence="17" key="1">
    <citation type="journal article" date="1997" name="Glycobiology">
        <title>Isolation and characterization of an alpha 1,2-mannosidase cDNA from the lepidopteran insect cell line Sf9.</title>
        <authorList>
            <person name="Kawar Z."/>
            <person name="Herscovics A."/>
            <person name="Jarvis D.L."/>
        </authorList>
    </citation>
    <scope>NUCLEOTIDE SEQUENCE [MRNA]</scope>
    <scope>CATALYTIC ACTIVITY</scope>
    <scope>ACTIVITY REGULATION</scope>
</reference>
<reference key="2">
    <citation type="journal article" date="2000" name="Glycobiology">
        <title>N-Glycan processing by a lepidopteran insect alpha1,2-mannosidase.</title>
        <authorList>
            <person name="Kawar Z."/>
            <person name="Romero P.A."/>
            <person name="Herscovics A."/>
            <person name="Jarvis D.L."/>
        </authorList>
    </citation>
    <scope>FUNCTION</scope>
    <scope>CATALYTIC ACTIVITY</scope>
    <scope>SUBSTRATE SPECIFICITY</scope>
    <scope>GLYCOSYLATION</scope>
</reference>
<reference key="3">
    <citation type="journal article" date="2001" name="Insect Biochem. Mol. Biol.">
        <title>Biosynthesis and subcellular localization of a lepidopteran insect alpha 1,2-mannosidase.</title>
        <authorList>
            <person name="Kawar Z."/>
            <person name="Jarvis D.L."/>
        </authorList>
    </citation>
    <scope>SUBCELLULAR LOCATION</scope>
    <scope>GLYCOSYLATION AT ASN-61</scope>
    <scope>MUTAGENESIS OF ASN-61 AND 62-ASP-SER-63</scope>
</reference>
<feature type="chain" id="PRO_0000450598" description="Mannosyl-oligosaccharide alpha-1,2-mannosidase IA">
    <location>
        <begin position="1"/>
        <end position="670"/>
    </location>
</feature>
<feature type="topological domain" description="Cytoplasmic" evidence="15">
    <location>
        <begin position="1"/>
        <end position="30"/>
    </location>
</feature>
<feature type="transmembrane region" description="Helical; Signal-anchor for type II membrane protein" evidence="5">
    <location>
        <begin position="31"/>
        <end position="51"/>
    </location>
</feature>
<feature type="topological domain" description="Lumenal" evidence="15">
    <location>
        <begin position="52"/>
        <end position="670"/>
    </location>
</feature>
<feature type="region of interest" description="Disordered" evidence="8">
    <location>
        <begin position="135"/>
        <end position="177"/>
    </location>
</feature>
<feature type="active site" description="Proton donor" evidence="1">
    <location>
        <position position="526"/>
    </location>
</feature>
<feature type="binding site" evidence="2">
    <location>
        <position position="637"/>
    </location>
    <ligand>
        <name>Ca(2+)</name>
        <dbReference type="ChEBI" id="CHEBI:29108"/>
    </ligand>
</feature>
<feature type="glycosylation site" description="N-linked (GlcNAc...) asparagine" evidence="6 10">
    <location>
        <position position="61"/>
    </location>
</feature>
<feature type="disulfide bond" evidence="2">
    <location>
        <begin position="480"/>
        <end position="512"/>
    </location>
</feature>
<feature type="mutagenesis site" description="Loss of N-glycosylation." evidence="10">
    <original>N</original>
    <variation>S</variation>
    <location>
        <position position="61"/>
    </location>
</feature>
<feature type="mutagenesis site" description="Increased N-glycosylation." evidence="10">
    <original>DS</original>
    <variation>ST</variation>
    <location>
        <begin position="62"/>
        <end position="63"/>
    </location>
</feature>
<organism evidence="17">
    <name type="scientific">Spodoptera frugiperda</name>
    <name type="common">Fall armyworm</name>
    <dbReference type="NCBI Taxonomy" id="7108"/>
    <lineage>
        <taxon>Eukaryota</taxon>
        <taxon>Metazoa</taxon>
        <taxon>Ecdysozoa</taxon>
        <taxon>Arthropoda</taxon>
        <taxon>Hexapoda</taxon>
        <taxon>Insecta</taxon>
        <taxon>Pterygota</taxon>
        <taxon>Neoptera</taxon>
        <taxon>Endopterygota</taxon>
        <taxon>Lepidoptera</taxon>
        <taxon>Glossata</taxon>
        <taxon>Ditrysia</taxon>
        <taxon>Noctuoidea</taxon>
        <taxon>Noctuidae</taxon>
        <taxon>Amphipyrinae</taxon>
        <taxon>Spodoptera</taxon>
    </lineage>
</organism>
<sequence>MTGILPTYQRFVNGVPVPSISRRSFRLREKYLIVSVLLTFGIVWLGALFYLPEFKSSNSVNDSVYNVYKRIQKAGPELLMPPPLAQNDVGDFPVIGIAHHGEGGDDPHVIEDRNRLRAKIEEDMGMKVLERPQFDVAPSVSSSRGPSKPPVDAIEEPAVGNNAANKDVSPSGPKAESSDKFVAVALAPGADPEIKHKLETVKKMMLHAWYNYKLYAWGKNELKPMSKRAHLSSVFGAGELGATIVDGLDTLYLMGLNDEFREGRDWVAEHLHINEIDSDLSVFETTIRFVGGLLSCYALTGDTMFRDKAAEVGDALLPAFDTPTGLPYALINPSTKASRQYHWAGPNSILSELGTLHLEFTYLSDVTGRDIYRQKVSRIREVLDQIDKPGDLYPNFINPRTGQWGQRHMSLGALGDSFYEYLLKAWLMSGGADEQARIMFDTAMQAALDKMLRVSPSGLAYLAELKYGRIIEEKMDHLSCFAGGMFALASTTLDNSMSERYMDVAKKLTNTCHESYARSETKLGPEAFRFSNAAEARAQKSNEKVYLLRPETFESYFIMWRLTKQQMYRDWAWEAVQALEKHCRVEGGYTGLVNVYHANPQGDDVQQSFFLAETLKYLYLIFGDDSFLPLDEWVFNTEAHPFPIRGKNPLYRAVDKPVLPEPAHAQNNRI</sequence>
<keyword id="KW-0106">Calcium</keyword>
<keyword id="KW-1015">Disulfide bond</keyword>
<keyword id="KW-0325">Glycoprotein</keyword>
<keyword id="KW-0326">Glycosidase</keyword>
<keyword id="KW-0333">Golgi apparatus</keyword>
<keyword id="KW-0378">Hydrolase</keyword>
<keyword id="KW-0472">Membrane</keyword>
<keyword id="KW-0479">Metal-binding</keyword>
<keyword id="KW-0735">Signal-anchor</keyword>
<keyword id="KW-0812">Transmembrane</keyword>
<keyword id="KW-1133">Transmembrane helix</keyword>
<proteinExistence type="evidence at protein level"/>